<reference key="1">
    <citation type="journal article" date="2008" name="PLoS ONE">
        <title>Genome sequence of the saprophyte Leptospira biflexa provides insights into the evolution of Leptospira and the pathogenesis of leptospirosis.</title>
        <authorList>
            <person name="Picardeau M."/>
            <person name="Bulach D.M."/>
            <person name="Bouchier C."/>
            <person name="Zuerner R.L."/>
            <person name="Zidane N."/>
            <person name="Wilson P.J."/>
            <person name="Creno S."/>
            <person name="Kuczek E.S."/>
            <person name="Bommezzadri S."/>
            <person name="Davis J.C."/>
            <person name="McGrath A."/>
            <person name="Johnson M.J."/>
            <person name="Boursaux-Eude C."/>
            <person name="Seemann T."/>
            <person name="Rouy Z."/>
            <person name="Coppel R.L."/>
            <person name="Rood J.I."/>
            <person name="Lajus A."/>
            <person name="Davies J.K."/>
            <person name="Medigue C."/>
            <person name="Adler B."/>
        </authorList>
    </citation>
    <scope>NUCLEOTIDE SEQUENCE [LARGE SCALE GENOMIC DNA]</scope>
    <source>
        <strain>Patoc 1 / ATCC 23582 / Paris</strain>
    </source>
</reference>
<feature type="chain" id="PRO_1000139039" description="Acyl carrier protein">
    <location>
        <begin position="1"/>
        <end position="77"/>
    </location>
</feature>
<feature type="domain" description="Carrier" evidence="2">
    <location>
        <begin position="1"/>
        <end position="76"/>
    </location>
</feature>
<feature type="modified residue" description="O-(pantetheine 4'-phosphoryl)serine" evidence="2">
    <location>
        <position position="36"/>
    </location>
</feature>
<sequence length="77" mass="8498">MADFEKIKSIIVEQLGVDESEVTPEAHFINDLGADSLDTVELVMALEEEFGVEISDEDAEKIQTVGDVIKFIDKLKG</sequence>
<gene>
    <name evidence="1" type="primary">acpP</name>
    <name type="ordered locus">LEPBI_I2585</name>
</gene>
<evidence type="ECO:0000255" key="1">
    <source>
        <dbReference type="HAMAP-Rule" id="MF_01217"/>
    </source>
</evidence>
<evidence type="ECO:0000255" key="2">
    <source>
        <dbReference type="PROSITE-ProRule" id="PRU00258"/>
    </source>
</evidence>
<keyword id="KW-0963">Cytoplasm</keyword>
<keyword id="KW-0275">Fatty acid biosynthesis</keyword>
<keyword id="KW-0276">Fatty acid metabolism</keyword>
<keyword id="KW-0444">Lipid biosynthesis</keyword>
<keyword id="KW-0443">Lipid metabolism</keyword>
<keyword id="KW-0596">Phosphopantetheine</keyword>
<keyword id="KW-0597">Phosphoprotein</keyword>
<keyword id="KW-1185">Reference proteome</keyword>
<proteinExistence type="inferred from homology"/>
<comment type="function">
    <text evidence="1">Carrier of the growing fatty acid chain in fatty acid biosynthesis.</text>
</comment>
<comment type="pathway">
    <text evidence="1">Lipid metabolism; fatty acid biosynthesis.</text>
</comment>
<comment type="subcellular location">
    <subcellularLocation>
        <location evidence="1">Cytoplasm</location>
    </subcellularLocation>
</comment>
<comment type="PTM">
    <text evidence="1">4'-phosphopantetheine is transferred from CoA to a specific serine of apo-ACP by AcpS. This modification is essential for activity because fatty acids are bound in thioester linkage to the sulfhydryl of the prosthetic group.</text>
</comment>
<comment type="similarity">
    <text evidence="1">Belongs to the acyl carrier protein (ACP) family.</text>
</comment>
<dbReference type="EMBL" id="CP000786">
    <property type="protein sequence ID" value="ABZ98666.1"/>
    <property type="molecule type" value="Genomic_DNA"/>
</dbReference>
<dbReference type="RefSeq" id="WP_002974954.1">
    <property type="nucleotide sequence ID" value="NC_010602.1"/>
</dbReference>
<dbReference type="SMR" id="B0SM36"/>
<dbReference type="STRING" id="456481.LEPBI_I2585"/>
<dbReference type="GeneID" id="93342018"/>
<dbReference type="KEGG" id="lbi:LEPBI_I2585"/>
<dbReference type="HOGENOM" id="CLU_108696_5_1_12"/>
<dbReference type="OrthoDB" id="9804551at2"/>
<dbReference type="BioCyc" id="LBIF456481:LEPBI_RS12725-MONOMER"/>
<dbReference type="UniPathway" id="UPA00094"/>
<dbReference type="Proteomes" id="UP000001847">
    <property type="component" value="Chromosome I"/>
</dbReference>
<dbReference type="GO" id="GO:0005829">
    <property type="term" value="C:cytosol"/>
    <property type="evidence" value="ECO:0007669"/>
    <property type="project" value="TreeGrafter"/>
</dbReference>
<dbReference type="GO" id="GO:0016020">
    <property type="term" value="C:membrane"/>
    <property type="evidence" value="ECO:0007669"/>
    <property type="project" value="GOC"/>
</dbReference>
<dbReference type="GO" id="GO:0000035">
    <property type="term" value="F:acyl binding"/>
    <property type="evidence" value="ECO:0007669"/>
    <property type="project" value="TreeGrafter"/>
</dbReference>
<dbReference type="GO" id="GO:0000036">
    <property type="term" value="F:acyl carrier activity"/>
    <property type="evidence" value="ECO:0007669"/>
    <property type="project" value="UniProtKB-UniRule"/>
</dbReference>
<dbReference type="GO" id="GO:0009245">
    <property type="term" value="P:lipid A biosynthetic process"/>
    <property type="evidence" value="ECO:0007669"/>
    <property type="project" value="TreeGrafter"/>
</dbReference>
<dbReference type="FunFam" id="1.10.1200.10:FF:000006">
    <property type="entry name" value="Acyl carrier protein"/>
    <property type="match status" value="1"/>
</dbReference>
<dbReference type="Gene3D" id="1.10.1200.10">
    <property type="entry name" value="ACP-like"/>
    <property type="match status" value="1"/>
</dbReference>
<dbReference type="HAMAP" id="MF_01217">
    <property type="entry name" value="Acyl_carrier"/>
    <property type="match status" value="1"/>
</dbReference>
<dbReference type="InterPro" id="IPR003231">
    <property type="entry name" value="ACP"/>
</dbReference>
<dbReference type="InterPro" id="IPR036736">
    <property type="entry name" value="ACP-like_sf"/>
</dbReference>
<dbReference type="InterPro" id="IPR009081">
    <property type="entry name" value="PP-bd_ACP"/>
</dbReference>
<dbReference type="InterPro" id="IPR006162">
    <property type="entry name" value="Ppantetheine_attach_site"/>
</dbReference>
<dbReference type="NCBIfam" id="TIGR00517">
    <property type="entry name" value="acyl_carrier"/>
    <property type="match status" value="1"/>
</dbReference>
<dbReference type="NCBIfam" id="NF002148">
    <property type="entry name" value="PRK00982.1-2"/>
    <property type="match status" value="1"/>
</dbReference>
<dbReference type="NCBIfam" id="NF002149">
    <property type="entry name" value="PRK00982.1-3"/>
    <property type="match status" value="1"/>
</dbReference>
<dbReference type="NCBIfam" id="NF002150">
    <property type="entry name" value="PRK00982.1-4"/>
    <property type="match status" value="1"/>
</dbReference>
<dbReference type="NCBIfam" id="NF002151">
    <property type="entry name" value="PRK00982.1-5"/>
    <property type="match status" value="1"/>
</dbReference>
<dbReference type="PANTHER" id="PTHR20863">
    <property type="entry name" value="ACYL CARRIER PROTEIN"/>
    <property type="match status" value="1"/>
</dbReference>
<dbReference type="PANTHER" id="PTHR20863:SF76">
    <property type="entry name" value="CARRIER DOMAIN-CONTAINING PROTEIN"/>
    <property type="match status" value="1"/>
</dbReference>
<dbReference type="Pfam" id="PF00550">
    <property type="entry name" value="PP-binding"/>
    <property type="match status" value="1"/>
</dbReference>
<dbReference type="SUPFAM" id="SSF47336">
    <property type="entry name" value="ACP-like"/>
    <property type="match status" value="1"/>
</dbReference>
<dbReference type="PROSITE" id="PS50075">
    <property type="entry name" value="CARRIER"/>
    <property type="match status" value="1"/>
</dbReference>
<dbReference type="PROSITE" id="PS00012">
    <property type="entry name" value="PHOSPHOPANTETHEINE"/>
    <property type="match status" value="1"/>
</dbReference>
<organism>
    <name type="scientific">Leptospira biflexa serovar Patoc (strain Patoc 1 / ATCC 23582 / Paris)</name>
    <dbReference type="NCBI Taxonomy" id="456481"/>
    <lineage>
        <taxon>Bacteria</taxon>
        <taxon>Pseudomonadati</taxon>
        <taxon>Spirochaetota</taxon>
        <taxon>Spirochaetia</taxon>
        <taxon>Leptospirales</taxon>
        <taxon>Leptospiraceae</taxon>
        <taxon>Leptospira</taxon>
    </lineage>
</organism>
<accession>B0SM36</accession>
<name>ACP_LEPBP</name>
<protein>
    <recommendedName>
        <fullName evidence="1">Acyl carrier protein</fullName>
        <shortName evidence="1">ACP</shortName>
    </recommendedName>
</protein>